<organism>
    <name type="scientific">Bacillus anthracis</name>
    <dbReference type="NCBI Taxonomy" id="1392"/>
    <lineage>
        <taxon>Bacteria</taxon>
        <taxon>Bacillati</taxon>
        <taxon>Bacillota</taxon>
        <taxon>Bacilli</taxon>
        <taxon>Bacillales</taxon>
        <taxon>Bacillaceae</taxon>
        <taxon>Bacillus</taxon>
        <taxon>Bacillus cereus group</taxon>
    </lineage>
</organism>
<keyword id="KW-0002">3D-structure</keyword>
<keyword id="KW-0648">Protein biosynthesis</keyword>
<keyword id="KW-1185">Reference proteome</keyword>
<keyword id="KW-0808">Transferase</keyword>
<proteinExistence type="evidence at protein level"/>
<evidence type="ECO:0000255" key="1">
    <source>
        <dbReference type="HAMAP-Rule" id="MF_00182"/>
    </source>
</evidence>
<evidence type="ECO:0007829" key="2">
    <source>
        <dbReference type="PDB" id="4IQF"/>
    </source>
</evidence>
<sequence length="314" mass="34736">MIKVVFMGTPDFSVPVLRRLIEDGYDVIGVVTQPDRPVGRKKVLTPTPVKVEAEKHGIPVLQPLRIREKDEYEKVLALEPDLIVTAAFGQIVPNEILEAPKYGCINVHASLLPELRGGAPIHYAIMEGKEKTGITIMYMVEKLDAGDILTQVEVEIEERETTGSLFDKLSEAGAHLLSKTVPLLIQGKLEPIKQNEEEVTFAYNIKREQEKIDWTKTGEEVYNHIRGLNPWPVAYTTLAGQVVKVWWGEKVPVTKSAEAGTIVAIEEDGFVVATGNETGVKITELQPSGKKRMSCSQFLRGTKPEIGTKLGENA</sequence>
<protein>
    <recommendedName>
        <fullName evidence="1">Methionyl-tRNA formyltransferase</fullName>
        <ecNumber evidence="1">2.1.2.9</ecNumber>
    </recommendedName>
</protein>
<comment type="function">
    <text evidence="1">Attaches a formyl group to the free amino group of methionyl-tRNA(fMet). The formyl group appears to play a dual role in the initiator identity of N-formylmethionyl-tRNA by promoting its recognition by IF2 and preventing the misappropriation of this tRNA by the elongation apparatus.</text>
</comment>
<comment type="catalytic activity">
    <reaction evidence="1">
        <text>L-methionyl-tRNA(fMet) + (6R)-10-formyltetrahydrofolate = N-formyl-L-methionyl-tRNA(fMet) + (6S)-5,6,7,8-tetrahydrofolate + H(+)</text>
        <dbReference type="Rhea" id="RHEA:24380"/>
        <dbReference type="Rhea" id="RHEA-COMP:9952"/>
        <dbReference type="Rhea" id="RHEA-COMP:9953"/>
        <dbReference type="ChEBI" id="CHEBI:15378"/>
        <dbReference type="ChEBI" id="CHEBI:57453"/>
        <dbReference type="ChEBI" id="CHEBI:78530"/>
        <dbReference type="ChEBI" id="CHEBI:78844"/>
        <dbReference type="ChEBI" id="CHEBI:195366"/>
        <dbReference type="EC" id="2.1.2.9"/>
    </reaction>
</comment>
<comment type="similarity">
    <text evidence="1">Belongs to the Fmt family.</text>
</comment>
<dbReference type="EC" id="2.1.2.9" evidence="1"/>
<dbReference type="EMBL" id="AE016879">
    <property type="protein sequence ID" value="AAP27732.1"/>
    <property type="molecule type" value="Genomic_DNA"/>
</dbReference>
<dbReference type="EMBL" id="AE017334">
    <property type="protein sequence ID" value="AAT33120.1"/>
    <property type="molecule type" value="Genomic_DNA"/>
</dbReference>
<dbReference type="EMBL" id="AE017225">
    <property type="protein sequence ID" value="AAT56019.1"/>
    <property type="molecule type" value="Genomic_DNA"/>
</dbReference>
<dbReference type="RefSeq" id="NP_846246.1">
    <property type="nucleotide sequence ID" value="NC_003997.3"/>
</dbReference>
<dbReference type="RefSeq" id="WP_000598790.1">
    <property type="nucleotide sequence ID" value="NZ_WXXJ01000026.1"/>
</dbReference>
<dbReference type="RefSeq" id="YP_029968.1">
    <property type="nucleotide sequence ID" value="NC_005945.1"/>
</dbReference>
<dbReference type="PDB" id="4IQF">
    <property type="method" value="X-ray"/>
    <property type="resolution" value="2.40 A"/>
    <property type="chains" value="A/B/C/D=1-314"/>
</dbReference>
<dbReference type="PDBsum" id="4IQF"/>
<dbReference type="SMR" id="Q81WH2"/>
<dbReference type="STRING" id="261594.GBAA_4004"/>
<dbReference type="DNASU" id="1086742"/>
<dbReference type="GeneID" id="45023695"/>
<dbReference type="KEGG" id="ban:BA_4004"/>
<dbReference type="KEGG" id="bar:GBAA_4004"/>
<dbReference type="KEGG" id="bat:BAS3717"/>
<dbReference type="PATRIC" id="fig|198094.11.peg.3974"/>
<dbReference type="eggNOG" id="COG0223">
    <property type="taxonomic scope" value="Bacteria"/>
</dbReference>
<dbReference type="HOGENOM" id="CLU_033347_1_1_9"/>
<dbReference type="OMA" id="GITTMLM"/>
<dbReference type="OrthoDB" id="9802815at2"/>
<dbReference type="EvolutionaryTrace" id="Q81WH2"/>
<dbReference type="Proteomes" id="UP000000427">
    <property type="component" value="Chromosome"/>
</dbReference>
<dbReference type="Proteomes" id="UP000000594">
    <property type="component" value="Chromosome"/>
</dbReference>
<dbReference type="GO" id="GO:0005829">
    <property type="term" value="C:cytosol"/>
    <property type="evidence" value="ECO:0007669"/>
    <property type="project" value="TreeGrafter"/>
</dbReference>
<dbReference type="GO" id="GO:0004479">
    <property type="term" value="F:methionyl-tRNA formyltransferase activity"/>
    <property type="evidence" value="ECO:0007669"/>
    <property type="project" value="UniProtKB-UniRule"/>
</dbReference>
<dbReference type="CDD" id="cd08646">
    <property type="entry name" value="FMT_core_Met-tRNA-FMT_N"/>
    <property type="match status" value="1"/>
</dbReference>
<dbReference type="CDD" id="cd08704">
    <property type="entry name" value="Met_tRNA_FMT_C"/>
    <property type="match status" value="1"/>
</dbReference>
<dbReference type="FunFam" id="3.10.25.10:FF:000003">
    <property type="entry name" value="Methionyl-tRNA formyltransferase"/>
    <property type="match status" value="1"/>
</dbReference>
<dbReference type="FunFam" id="3.40.50.170:FF:000004">
    <property type="entry name" value="Methionyl-tRNA formyltransferase"/>
    <property type="match status" value="1"/>
</dbReference>
<dbReference type="Gene3D" id="3.10.25.10">
    <property type="entry name" value="Formyl transferase, C-terminal domain"/>
    <property type="match status" value="1"/>
</dbReference>
<dbReference type="Gene3D" id="3.40.50.170">
    <property type="entry name" value="Formyl transferase, N-terminal domain"/>
    <property type="match status" value="1"/>
</dbReference>
<dbReference type="HAMAP" id="MF_00182">
    <property type="entry name" value="Formyl_trans"/>
    <property type="match status" value="1"/>
</dbReference>
<dbReference type="InterPro" id="IPR005794">
    <property type="entry name" value="Fmt"/>
</dbReference>
<dbReference type="InterPro" id="IPR005793">
    <property type="entry name" value="Formyl_trans_C"/>
</dbReference>
<dbReference type="InterPro" id="IPR037022">
    <property type="entry name" value="Formyl_trans_C_sf"/>
</dbReference>
<dbReference type="InterPro" id="IPR002376">
    <property type="entry name" value="Formyl_transf_N"/>
</dbReference>
<dbReference type="InterPro" id="IPR036477">
    <property type="entry name" value="Formyl_transf_N_sf"/>
</dbReference>
<dbReference type="InterPro" id="IPR011034">
    <property type="entry name" value="Formyl_transferase-like_C_sf"/>
</dbReference>
<dbReference type="InterPro" id="IPR001555">
    <property type="entry name" value="GART_AS"/>
</dbReference>
<dbReference type="InterPro" id="IPR044135">
    <property type="entry name" value="Met-tRNA-FMT_C"/>
</dbReference>
<dbReference type="InterPro" id="IPR041711">
    <property type="entry name" value="Met-tRNA-FMT_N"/>
</dbReference>
<dbReference type="NCBIfam" id="TIGR00460">
    <property type="entry name" value="fmt"/>
    <property type="match status" value="1"/>
</dbReference>
<dbReference type="PANTHER" id="PTHR11138">
    <property type="entry name" value="METHIONYL-TRNA FORMYLTRANSFERASE"/>
    <property type="match status" value="1"/>
</dbReference>
<dbReference type="PANTHER" id="PTHR11138:SF5">
    <property type="entry name" value="METHIONYL-TRNA FORMYLTRANSFERASE, MITOCHONDRIAL"/>
    <property type="match status" value="1"/>
</dbReference>
<dbReference type="Pfam" id="PF02911">
    <property type="entry name" value="Formyl_trans_C"/>
    <property type="match status" value="1"/>
</dbReference>
<dbReference type="Pfam" id="PF00551">
    <property type="entry name" value="Formyl_trans_N"/>
    <property type="match status" value="1"/>
</dbReference>
<dbReference type="SUPFAM" id="SSF50486">
    <property type="entry name" value="FMT C-terminal domain-like"/>
    <property type="match status" value="1"/>
</dbReference>
<dbReference type="SUPFAM" id="SSF53328">
    <property type="entry name" value="Formyltransferase"/>
    <property type="match status" value="1"/>
</dbReference>
<dbReference type="PROSITE" id="PS00373">
    <property type="entry name" value="GART"/>
    <property type="match status" value="1"/>
</dbReference>
<reference key="1">
    <citation type="journal article" date="2003" name="Nature">
        <title>The genome sequence of Bacillus anthracis Ames and comparison to closely related bacteria.</title>
        <authorList>
            <person name="Read T.D."/>
            <person name="Peterson S.N."/>
            <person name="Tourasse N.J."/>
            <person name="Baillie L.W."/>
            <person name="Paulsen I.T."/>
            <person name="Nelson K.E."/>
            <person name="Tettelin H."/>
            <person name="Fouts D.E."/>
            <person name="Eisen J.A."/>
            <person name="Gill S.R."/>
            <person name="Holtzapple E.K."/>
            <person name="Okstad O.A."/>
            <person name="Helgason E."/>
            <person name="Rilstone J."/>
            <person name="Wu M."/>
            <person name="Kolonay J.F."/>
            <person name="Beanan M.J."/>
            <person name="Dodson R.J."/>
            <person name="Brinkac L.M."/>
            <person name="Gwinn M.L."/>
            <person name="DeBoy R.T."/>
            <person name="Madpu R."/>
            <person name="Daugherty S.C."/>
            <person name="Durkin A.S."/>
            <person name="Haft D.H."/>
            <person name="Nelson W.C."/>
            <person name="Peterson J.D."/>
            <person name="Pop M."/>
            <person name="Khouri H.M."/>
            <person name="Radune D."/>
            <person name="Benton J.L."/>
            <person name="Mahamoud Y."/>
            <person name="Jiang L."/>
            <person name="Hance I.R."/>
            <person name="Weidman J.F."/>
            <person name="Berry K.J."/>
            <person name="Plaut R.D."/>
            <person name="Wolf A.M."/>
            <person name="Watkins K.L."/>
            <person name="Nierman W.C."/>
            <person name="Hazen A."/>
            <person name="Cline R.T."/>
            <person name="Redmond C."/>
            <person name="Thwaite J.E."/>
            <person name="White O."/>
            <person name="Salzberg S.L."/>
            <person name="Thomason B."/>
            <person name="Friedlander A.M."/>
            <person name="Koehler T.M."/>
            <person name="Hanna P.C."/>
            <person name="Kolstoe A.-B."/>
            <person name="Fraser C.M."/>
        </authorList>
    </citation>
    <scope>NUCLEOTIDE SEQUENCE [LARGE SCALE GENOMIC DNA]</scope>
    <source>
        <strain>Ames / isolate Porton</strain>
    </source>
</reference>
<reference key="2">
    <citation type="journal article" date="2009" name="J. Bacteriol.">
        <title>The complete genome sequence of Bacillus anthracis Ames 'Ancestor'.</title>
        <authorList>
            <person name="Ravel J."/>
            <person name="Jiang L."/>
            <person name="Stanley S.T."/>
            <person name="Wilson M.R."/>
            <person name="Decker R.S."/>
            <person name="Read T.D."/>
            <person name="Worsham P."/>
            <person name="Keim P.S."/>
            <person name="Salzberg S.L."/>
            <person name="Fraser-Liggett C.M."/>
            <person name="Rasko D.A."/>
        </authorList>
    </citation>
    <scope>NUCLEOTIDE SEQUENCE [LARGE SCALE GENOMIC DNA]</scope>
    <source>
        <strain>Ames ancestor</strain>
    </source>
</reference>
<reference key="3">
    <citation type="submission" date="2004-01" db="EMBL/GenBank/DDBJ databases">
        <title>Complete genome sequence of Bacillus anthracis Sterne.</title>
        <authorList>
            <person name="Brettin T.S."/>
            <person name="Bruce D."/>
            <person name="Challacombe J.F."/>
            <person name="Gilna P."/>
            <person name="Han C."/>
            <person name="Hill K."/>
            <person name="Hitchcock P."/>
            <person name="Jackson P."/>
            <person name="Keim P."/>
            <person name="Longmire J."/>
            <person name="Lucas S."/>
            <person name="Okinaka R."/>
            <person name="Richardson P."/>
            <person name="Rubin E."/>
            <person name="Tice H."/>
        </authorList>
    </citation>
    <scope>NUCLEOTIDE SEQUENCE [LARGE SCALE GENOMIC DNA]</scope>
    <source>
        <strain>Sterne</strain>
    </source>
</reference>
<feature type="chain" id="PRO_0000082910" description="Methionyl-tRNA formyltransferase">
    <location>
        <begin position="1"/>
        <end position="314"/>
    </location>
</feature>
<feature type="binding site" evidence="1">
    <location>
        <begin position="110"/>
        <end position="113"/>
    </location>
    <ligand>
        <name>(6S)-5,6,7,8-tetrahydrofolate</name>
        <dbReference type="ChEBI" id="CHEBI:57453"/>
    </ligand>
</feature>
<feature type="strand" evidence="2">
    <location>
        <begin position="3"/>
        <end position="8"/>
    </location>
</feature>
<feature type="helix" evidence="2">
    <location>
        <begin position="13"/>
        <end position="22"/>
    </location>
</feature>
<feature type="strand" evidence="2">
    <location>
        <begin position="26"/>
        <end position="31"/>
    </location>
</feature>
<feature type="turn" evidence="2">
    <location>
        <begin position="39"/>
        <end position="42"/>
    </location>
</feature>
<feature type="helix" evidence="2">
    <location>
        <begin position="48"/>
        <end position="55"/>
    </location>
</feature>
<feature type="helix" evidence="2">
    <location>
        <begin position="69"/>
        <end position="78"/>
    </location>
</feature>
<feature type="strand" evidence="2">
    <location>
        <begin position="81"/>
        <end position="87"/>
    </location>
</feature>
<feature type="helix" evidence="2">
    <location>
        <begin position="94"/>
        <end position="97"/>
    </location>
</feature>
<feature type="strand" evidence="2">
    <location>
        <begin position="104"/>
        <end position="110"/>
    </location>
</feature>
<feature type="strand" evidence="2">
    <location>
        <begin position="114"/>
        <end position="118"/>
    </location>
</feature>
<feature type="helix" evidence="2">
    <location>
        <begin position="120"/>
        <end position="126"/>
    </location>
</feature>
<feature type="strand" evidence="2">
    <location>
        <begin position="130"/>
        <end position="138"/>
    </location>
</feature>
<feature type="strand" evidence="2">
    <location>
        <begin position="148"/>
        <end position="155"/>
    </location>
</feature>
<feature type="helix" evidence="2">
    <location>
        <begin position="162"/>
        <end position="185"/>
    </location>
</feature>
<feature type="helix" evidence="2">
    <location>
        <begin position="196"/>
        <end position="198"/>
    </location>
</feature>
<feature type="helix" evidence="2">
    <location>
        <begin position="207"/>
        <end position="210"/>
    </location>
</feature>
<feature type="helix" evidence="2">
    <location>
        <begin position="218"/>
        <end position="226"/>
    </location>
</feature>
<feature type="turn" evidence="2">
    <location>
        <begin position="227"/>
        <end position="232"/>
    </location>
</feature>
<feature type="strand" evidence="2">
    <location>
        <begin position="234"/>
        <end position="238"/>
    </location>
</feature>
<feature type="strand" evidence="2">
    <location>
        <begin position="241"/>
        <end position="252"/>
    </location>
</feature>
<feature type="strand" evidence="2">
    <location>
        <begin position="261"/>
        <end position="265"/>
    </location>
</feature>
<feature type="strand" evidence="2">
    <location>
        <begin position="270"/>
        <end position="272"/>
    </location>
</feature>
<feature type="strand" evidence="2">
    <location>
        <begin position="275"/>
        <end position="287"/>
    </location>
</feature>
<feature type="helix" evidence="2">
    <location>
        <begin position="295"/>
        <end position="301"/>
    </location>
</feature>
<name>FMT_BACAN</name>
<accession>Q81WH2</accession>
<accession>Q6HUM0</accession>
<accession>Q6KNV4</accession>
<gene>
    <name evidence="1" type="primary">fmt</name>
    <name type="ordered locus">BA_4004</name>
    <name type="ordered locus">GBAA_4004</name>
    <name type="ordered locus">BAS3717</name>
</gene>